<dbReference type="EC" id="2.7.11.1"/>
<dbReference type="EMBL" id="L22858">
    <property type="protein sequence ID" value="AAA66753.1"/>
    <property type="molecule type" value="Genomic_DNA"/>
</dbReference>
<dbReference type="EMBL" id="U01142">
    <property type="protein sequence ID" value="AAA19444.1"/>
    <property type="molecule type" value="Unassigned_DNA"/>
</dbReference>
<dbReference type="PIR" id="D72865">
    <property type="entry name" value="D72865"/>
</dbReference>
<dbReference type="SMR" id="P41676"/>
<dbReference type="KEGG" id="vg:1403956"/>
<dbReference type="OrthoDB" id="10483at10239"/>
<dbReference type="Proteomes" id="UP000008292">
    <property type="component" value="Segment"/>
</dbReference>
<dbReference type="GO" id="GO:0030430">
    <property type="term" value="C:host cell cytoplasm"/>
    <property type="evidence" value="ECO:0007669"/>
    <property type="project" value="UniProtKB-SubCell"/>
</dbReference>
<dbReference type="GO" id="GO:0005524">
    <property type="term" value="F:ATP binding"/>
    <property type="evidence" value="ECO:0007669"/>
    <property type="project" value="UniProtKB-KW"/>
</dbReference>
<dbReference type="GO" id="GO:0106310">
    <property type="term" value="F:protein serine kinase activity"/>
    <property type="evidence" value="ECO:0007669"/>
    <property type="project" value="RHEA"/>
</dbReference>
<dbReference type="GO" id="GO:0004674">
    <property type="term" value="F:protein serine/threonine kinase activity"/>
    <property type="evidence" value="ECO:0007669"/>
    <property type="project" value="UniProtKB-KW"/>
</dbReference>
<dbReference type="GO" id="GO:0006417">
    <property type="term" value="P:regulation of translation"/>
    <property type="evidence" value="ECO:0007669"/>
    <property type="project" value="UniProtKB-ARBA"/>
</dbReference>
<dbReference type="GO" id="GO:0006950">
    <property type="term" value="P:response to stress"/>
    <property type="evidence" value="ECO:0007669"/>
    <property type="project" value="UniProtKB-ARBA"/>
</dbReference>
<dbReference type="Gene3D" id="1.10.510.10">
    <property type="entry name" value="Transferase(Phosphotransferase) domain 1"/>
    <property type="match status" value="1"/>
</dbReference>
<dbReference type="InterPro" id="IPR050339">
    <property type="entry name" value="CC_SR_Kinase"/>
</dbReference>
<dbReference type="InterPro" id="IPR011009">
    <property type="entry name" value="Kinase-like_dom_sf"/>
</dbReference>
<dbReference type="InterPro" id="IPR000719">
    <property type="entry name" value="Prot_kinase_dom"/>
</dbReference>
<dbReference type="PANTHER" id="PTHR11042:SF160">
    <property type="entry name" value="EUKARYOTIC TRANSLATION INITIATION FACTOR 2-ALPHA KINASE 1"/>
    <property type="match status" value="1"/>
</dbReference>
<dbReference type="PANTHER" id="PTHR11042">
    <property type="entry name" value="EUKARYOTIC TRANSLATION INITIATION FACTOR 2-ALPHA KINASE EIF2-ALPHA KINASE -RELATED"/>
    <property type="match status" value="1"/>
</dbReference>
<dbReference type="Pfam" id="PF00069">
    <property type="entry name" value="Pkinase"/>
    <property type="match status" value="1"/>
</dbReference>
<dbReference type="SMART" id="SM00220">
    <property type="entry name" value="S_TKc"/>
    <property type="match status" value="1"/>
</dbReference>
<dbReference type="SUPFAM" id="SSF56112">
    <property type="entry name" value="Protein kinase-like (PK-like)"/>
    <property type="match status" value="1"/>
</dbReference>
<dbReference type="PROSITE" id="PS50011">
    <property type="entry name" value="PROTEIN_KINASE_DOM"/>
    <property type="match status" value="1"/>
</dbReference>
<comment type="function">
    <text evidence="2 3">Plays a role in the inhibition of host eIF2alpha/EIF2S1 phosphorylation, thereby increasing viral fitness. In the insect host, targets the endogenous insect heme-regulated inhibitor (HRI)-like eIF2alpha kinase.</text>
</comment>
<comment type="catalytic activity">
    <reaction>
        <text>L-seryl-[protein] + ATP = O-phospho-L-seryl-[protein] + ADP + H(+)</text>
        <dbReference type="Rhea" id="RHEA:17989"/>
        <dbReference type="Rhea" id="RHEA-COMP:9863"/>
        <dbReference type="Rhea" id="RHEA-COMP:11604"/>
        <dbReference type="ChEBI" id="CHEBI:15378"/>
        <dbReference type="ChEBI" id="CHEBI:29999"/>
        <dbReference type="ChEBI" id="CHEBI:30616"/>
        <dbReference type="ChEBI" id="CHEBI:83421"/>
        <dbReference type="ChEBI" id="CHEBI:456216"/>
        <dbReference type="EC" id="2.7.11.1"/>
    </reaction>
</comment>
<comment type="catalytic activity">
    <reaction>
        <text>L-threonyl-[protein] + ATP = O-phospho-L-threonyl-[protein] + ADP + H(+)</text>
        <dbReference type="Rhea" id="RHEA:46608"/>
        <dbReference type="Rhea" id="RHEA-COMP:11060"/>
        <dbReference type="Rhea" id="RHEA-COMP:11605"/>
        <dbReference type="ChEBI" id="CHEBI:15378"/>
        <dbReference type="ChEBI" id="CHEBI:30013"/>
        <dbReference type="ChEBI" id="CHEBI:30616"/>
        <dbReference type="ChEBI" id="CHEBI:61977"/>
        <dbReference type="ChEBI" id="CHEBI:456216"/>
        <dbReference type="EC" id="2.7.11.1"/>
    </reaction>
</comment>
<comment type="subunit">
    <text evidence="2 3">Interacts with the kinase domain of host EIF2AK2.</text>
</comment>
<comment type="subcellular location">
    <subcellularLocation>
        <location>Host cytoplasm</location>
    </subcellularLocation>
</comment>
<comment type="similarity">
    <text evidence="1">Belongs to the protein kinase superfamily. Ser/Thr protein kinase family.</text>
</comment>
<comment type="caution">
    <text evidence="4">Asn-76 is present instead of the conserved Asp which is expected to be an active site residue.</text>
</comment>
<evidence type="ECO:0000255" key="1">
    <source>
        <dbReference type="PROSITE-ProRule" id="PRU00159"/>
    </source>
</evidence>
<evidence type="ECO:0000269" key="2">
    <source>
    </source>
</evidence>
<evidence type="ECO:0000269" key="3">
    <source>
    </source>
</evidence>
<evidence type="ECO:0000305" key="4"/>
<reference key="1">
    <citation type="journal article" date="1994" name="Virology">
        <title>The complete DNA sequence of Autographa californica nuclear polyhedrosis virus.</title>
        <authorList>
            <person name="Ayres M.D."/>
            <person name="Howard S.C."/>
            <person name="Kuzio J."/>
            <person name="Lopez-Ferber M."/>
            <person name="Possee R.D."/>
        </authorList>
    </citation>
    <scope>NUCLEOTIDE SEQUENCE [LARGE SCALE GENOMIC DNA]</scope>
    <source>
        <strain>C6</strain>
    </source>
</reference>
<reference key="2">
    <citation type="journal article" date="1994" name="Virology">
        <title>Identification of lef-7: a baculovirus gene affecting late gene expression.</title>
        <authorList>
            <person name="Morris T.D."/>
            <person name="Todd J.W."/>
            <person name="Fisher B."/>
            <person name="Miller L.K."/>
        </authorList>
    </citation>
    <scope>NUCLEOTIDE SEQUENCE</scope>
    <source>
        <strain>L1</strain>
    </source>
</reference>
<reference key="3">
    <citation type="journal article" date="1998" name="Proc. Natl. Acad. Sci. U.S.A.">
        <title>Disruption of cellular translational control by a viral truncated eukaryotic translation initiation factor 2alpha kinase homolog.</title>
        <authorList>
            <person name="Dever T.E."/>
            <person name="Sripriya R."/>
            <person name="McLachlin J.R."/>
            <person name="Lu J."/>
            <person name="Fabian J.R."/>
            <person name="Kimball S.R."/>
            <person name="Miller L.K."/>
        </authorList>
    </citation>
    <scope>FUNCTION</scope>
    <scope>INTERACTION WITH HOST EIF2AK2</scope>
</reference>
<reference key="4">
    <citation type="journal article" date="2015" name="Proc. Natl. Acad. Sci. U.S.A.">
        <title>Baculovirus protein PK2 subverts eIF2alpha kinase function by mimicry of its kinase domain C-lobe.</title>
        <authorList>
            <person name="Li J.J."/>
            <person name="Cao C."/>
            <person name="Fixsen S.M."/>
            <person name="Young J.M."/>
            <person name="Ono C."/>
            <person name="Bando H."/>
            <person name="Elde N.C."/>
            <person name="Katsuma S."/>
            <person name="Dever T.E."/>
            <person name="Sicheri F."/>
        </authorList>
    </citation>
    <scope>FUNCTION</scope>
    <scope>INTERACTION WITH HOST EIF2AK2</scope>
</reference>
<feature type="chain" id="PRO_0000086547" description="Probable serine/threonine-protein kinase 2">
    <location>
        <begin position="1"/>
        <end position="215"/>
    </location>
</feature>
<feature type="domain" description="Protein kinase" evidence="1">
    <location>
        <begin position="1"/>
        <end position="205"/>
    </location>
</feature>
<feature type="sequence conflict" description="In Ref. 2; AAA19444." evidence="4" ref="2">
    <original>I</original>
    <variation>F</variation>
    <location>
        <position position="18"/>
    </location>
</feature>
<accession>P41676</accession>
<proteinExistence type="evidence at protein level"/>
<sequence length="215" mass="24944">MKPEQLVYLNPRQHRIYIASPLNEYMLSDYLKQRNLQTFAKTNIKVPADFGFYISKFVDLVSAVKAIHSVNIVHHNINPEDIFMTGPDFDLYVGGMFGSLYKTFIKNNPQNITLYAAPEQIKKVYTPKNDMYSLGIVLFELIMPFKTALERETTLTNFRNNVQQMPASLSQGHPKLTEIVCKLIQHDYSQRPDAEWLLKEMEQLLLEYTTCSKKL</sequence>
<gene>
    <name type="primary">PK2</name>
    <name type="synonym">PK-2</name>
</gene>
<protein>
    <recommendedName>
        <fullName>Probable serine/threonine-protein kinase 2</fullName>
        <ecNumber>2.7.11.1</ecNumber>
    </recommendedName>
</protein>
<keyword id="KW-0067">ATP-binding</keyword>
<keyword id="KW-1035">Host cytoplasm</keyword>
<keyword id="KW-0945">Host-virus interaction</keyword>
<keyword id="KW-0418">Kinase</keyword>
<keyword id="KW-0547">Nucleotide-binding</keyword>
<keyword id="KW-1185">Reference proteome</keyword>
<keyword id="KW-0723">Serine/threonine-protein kinase</keyword>
<keyword id="KW-0808">Transferase</keyword>
<name>PK2_NPVAC</name>
<organism>
    <name type="scientific">Autographa californica nuclear polyhedrosis virus</name>
    <name type="common">AcMNPV</name>
    <dbReference type="NCBI Taxonomy" id="46015"/>
    <lineage>
        <taxon>Viruses</taxon>
        <taxon>Viruses incertae sedis</taxon>
        <taxon>Naldaviricetes</taxon>
        <taxon>Lefavirales</taxon>
        <taxon>Baculoviridae</taxon>
        <taxon>Alphabaculovirus</taxon>
        <taxon>Alphabaculovirus aucalifornicae</taxon>
    </lineage>
</organism>
<organismHost>
    <name type="scientific">Lepidoptera</name>
    <name type="common">butterflies and moths</name>
    <dbReference type="NCBI Taxonomy" id="7088"/>
</organismHost>